<keyword id="KW-0496">Mitochondrion</keyword>
<keyword id="KW-1185">Reference proteome</keyword>
<keyword id="KW-0687">Ribonucleoprotein</keyword>
<keyword id="KW-0689">Ribosomal protein</keyword>
<keyword id="KW-0809">Transit peptide</keyword>
<gene>
    <name type="primary">MRPS9</name>
    <name type="ordered locus">CAGL0L06732g</name>
</gene>
<organism>
    <name type="scientific">Candida glabrata (strain ATCC 2001 / BCRC 20586 / JCM 3761 / NBRC 0622 / NRRL Y-65 / CBS 138)</name>
    <name type="common">Yeast</name>
    <name type="synonym">Nakaseomyces glabratus</name>
    <dbReference type="NCBI Taxonomy" id="284593"/>
    <lineage>
        <taxon>Eukaryota</taxon>
        <taxon>Fungi</taxon>
        <taxon>Dikarya</taxon>
        <taxon>Ascomycota</taxon>
        <taxon>Saccharomycotina</taxon>
        <taxon>Saccharomycetes</taxon>
        <taxon>Saccharomycetales</taxon>
        <taxon>Saccharomycetaceae</taxon>
        <taxon>Nakaseomyces</taxon>
    </lineage>
</organism>
<sequence>MWMRVNRMLGNVSVRQFSNVRLVAQEYSMRVQQARNRIVPKSLTFYSANPLHEEKISRLESLLKKYALPSSQKLPGADISAEENLKQNPRPSWISFSDYALIGGGTRLKPRHYEHFIQLLNKLNNIDPQLVNTEIKNELSKYIKKSSIQSQKTQQKELDEFGRSVAIGKRKAATAKVYLVRGEGKILVNGRQLNDYFLKMKDRESIAYPLQVVDSLGKYNVFATCRGGGPTGQAEAIMHAIAKALLVFNPLLKPRLRKAGVITRDYRHVERKKPGKKKARKMPTWVKR</sequence>
<name>RT09_CANGA</name>
<dbReference type="EMBL" id="CR380958">
    <property type="protein sequence ID" value="CAG62039.1"/>
    <property type="molecule type" value="Genomic_DNA"/>
</dbReference>
<dbReference type="RefSeq" id="XP_449069.1">
    <property type="nucleotide sequence ID" value="XM_449069.1"/>
</dbReference>
<dbReference type="SMR" id="Q6FL25"/>
<dbReference type="FunCoup" id="Q6FL25">
    <property type="interactions" value="226"/>
</dbReference>
<dbReference type="STRING" id="284593.Q6FL25"/>
<dbReference type="EnsemblFungi" id="CAGL0L06732g-T">
    <property type="protein sequence ID" value="CAGL0L06732g-T-p1"/>
    <property type="gene ID" value="CAGL0L06732g"/>
</dbReference>
<dbReference type="KEGG" id="cgr:2890668"/>
<dbReference type="CGD" id="CAL0136082">
    <property type="gene designation" value="CAGL0L06732g"/>
</dbReference>
<dbReference type="VEuPathDB" id="FungiDB:CAGL0L06732g"/>
<dbReference type="eggNOG" id="KOG1697">
    <property type="taxonomic scope" value="Eukaryota"/>
</dbReference>
<dbReference type="HOGENOM" id="CLU_036531_0_0_1"/>
<dbReference type="InParanoid" id="Q6FL25"/>
<dbReference type="OMA" id="RESAMWA"/>
<dbReference type="Proteomes" id="UP000002428">
    <property type="component" value="Chromosome L"/>
</dbReference>
<dbReference type="GO" id="GO:0005763">
    <property type="term" value="C:mitochondrial small ribosomal subunit"/>
    <property type="evidence" value="ECO:0007669"/>
    <property type="project" value="EnsemblFungi"/>
</dbReference>
<dbReference type="GO" id="GO:0003723">
    <property type="term" value="F:RNA binding"/>
    <property type="evidence" value="ECO:0007669"/>
    <property type="project" value="TreeGrafter"/>
</dbReference>
<dbReference type="GO" id="GO:0003735">
    <property type="term" value="F:structural constituent of ribosome"/>
    <property type="evidence" value="ECO:0007669"/>
    <property type="project" value="EnsemblFungi"/>
</dbReference>
<dbReference type="GO" id="GO:0006412">
    <property type="term" value="P:translation"/>
    <property type="evidence" value="ECO:0007669"/>
    <property type="project" value="InterPro"/>
</dbReference>
<dbReference type="FunFam" id="3.30.230.10:FF:000001">
    <property type="entry name" value="30S ribosomal protein S9"/>
    <property type="match status" value="1"/>
</dbReference>
<dbReference type="Gene3D" id="3.30.230.10">
    <property type="match status" value="1"/>
</dbReference>
<dbReference type="InterPro" id="IPR020568">
    <property type="entry name" value="Ribosomal_Su5_D2-typ_SF"/>
</dbReference>
<dbReference type="InterPro" id="IPR000754">
    <property type="entry name" value="Ribosomal_uS9"/>
</dbReference>
<dbReference type="InterPro" id="IPR023035">
    <property type="entry name" value="Ribosomal_uS9_bac/plastid"/>
</dbReference>
<dbReference type="InterPro" id="IPR020574">
    <property type="entry name" value="Ribosomal_uS9_CS"/>
</dbReference>
<dbReference type="InterPro" id="IPR014721">
    <property type="entry name" value="Ribsml_uS5_D2-typ_fold_subgr"/>
</dbReference>
<dbReference type="NCBIfam" id="NF001099">
    <property type="entry name" value="PRK00132.1"/>
    <property type="match status" value="1"/>
</dbReference>
<dbReference type="PANTHER" id="PTHR21569">
    <property type="entry name" value="RIBOSOMAL PROTEIN S9"/>
    <property type="match status" value="1"/>
</dbReference>
<dbReference type="PANTHER" id="PTHR21569:SF1">
    <property type="entry name" value="SMALL RIBOSOMAL SUBUNIT PROTEIN US9M"/>
    <property type="match status" value="1"/>
</dbReference>
<dbReference type="Pfam" id="PF00380">
    <property type="entry name" value="Ribosomal_S9"/>
    <property type="match status" value="1"/>
</dbReference>
<dbReference type="SUPFAM" id="SSF54211">
    <property type="entry name" value="Ribosomal protein S5 domain 2-like"/>
    <property type="match status" value="1"/>
</dbReference>
<dbReference type="PROSITE" id="PS00360">
    <property type="entry name" value="RIBOSOMAL_S9"/>
    <property type="match status" value="1"/>
</dbReference>
<feature type="transit peptide" description="Mitochondrion" evidence="1">
    <location>
        <begin position="1"/>
        <end status="unknown"/>
    </location>
</feature>
<feature type="chain" id="PRO_0000030646" description="Small ribosomal subunit protein uS9m">
    <location>
        <begin status="unknown"/>
        <end position="288"/>
    </location>
</feature>
<feature type="region of interest" description="Disordered" evidence="2">
    <location>
        <begin position="269"/>
        <end position="288"/>
    </location>
</feature>
<accession>Q6FL25</accession>
<proteinExistence type="inferred from homology"/>
<evidence type="ECO:0000255" key="1"/>
<evidence type="ECO:0000256" key="2">
    <source>
        <dbReference type="SAM" id="MobiDB-lite"/>
    </source>
</evidence>
<evidence type="ECO:0000305" key="3"/>
<protein>
    <recommendedName>
        <fullName evidence="3">Small ribosomal subunit protein uS9m</fullName>
    </recommendedName>
    <alternativeName>
        <fullName>37S ribosomal protein S9, mitochondrial</fullName>
    </alternativeName>
</protein>
<comment type="subcellular location">
    <subcellularLocation>
        <location evidence="3">Mitochondrion</location>
    </subcellularLocation>
</comment>
<comment type="similarity">
    <text evidence="3">Belongs to the universal ribosomal protein uS9 family.</text>
</comment>
<reference key="1">
    <citation type="journal article" date="2004" name="Nature">
        <title>Genome evolution in yeasts.</title>
        <authorList>
            <person name="Dujon B."/>
            <person name="Sherman D."/>
            <person name="Fischer G."/>
            <person name="Durrens P."/>
            <person name="Casaregola S."/>
            <person name="Lafontaine I."/>
            <person name="de Montigny J."/>
            <person name="Marck C."/>
            <person name="Neuveglise C."/>
            <person name="Talla E."/>
            <person name="Goffard N."/>
            <person name="Frangeul L."/>
            <person name="Aigle M."/>
            <person name="Anthouard V."/>
            <person name="Babour A."/>
            <person name="Barbe V."/>
            <person name="Barnay S."/>
            <person name="Blanchin S."/>
            <person name="Beckerich J.-M."/>
            <person name="Beyne E."/>
            <person name="Bleykasten C."/>
            <person name="Boisrame A."/>
            <person name="Boyer J."/>
            <person name="Cattolico L."/>
            <person name="Confanioleri F."/>
            <person name="de Daruvar A."/>
            <person name="Despons L."/>
            <person name="Fabre E."/>
            <person name="Fairhead C."/>
            <person name="Ferry-Dumazet H."/>
            <person name="Groppi A."/>
            <person name="Hantraye F."/>
            <person name="Hennequin C."/>
            <person name="Jauniaux N."/>
            <person name="Joyet P."/>
            <person name="Kachouri R."/>
            <person name="Kerrest A."/>
            <person name="Koszul R."/>
            <person name="Lemaire M."/>
            <person name="Lesur I."/>
            <person name="Ma L."/>
            <person name="Muller H."/>
            <person name="Nicaud J.-M."/>
            <person name="Nikolski M."/>
            <person name="Oztas S."/>
            <person name="Ozier-Kalogeropoulos O."/>
            <person name="Pellenz S."/>
            <person name="Potier S."/>
            <person name="Richard G.-F."/>
            <person name="Straub M.-L."/>
            <person name="Suleau A."/>
            <person name="Swennen D."/>
            <person name="Tekaia F."/>
            <person name="Wesolowski-Louvel M."/>
            <person name="Westhof E."/>
            <person name="Wirth B."/>
            <person name="Zeniou-Meyer M."/>
            <person name="Zivanovic Y."/>
            <person name="Bolotin-Fukuhara M."/>
            <person name="Thierry A."/>
            <person name="Bouchier C."/>
            <person name="Caudron B."/>
            <person name="Scarpelli C."/>
            <person name="Gaillardin C."/>
            <person name="Weissenbach J."/>
            <person name="Wincker P."/>
            <person name="Souciet J.-L."/>
        </authorList>
    </citation>
    <scope>NUCLEOTIDE SEQUENCE [LARGE SCALE GENOMIC DNA]</scope>
    <source>
        <strain>ATCC 2001 / BCRC 20586 / JCM 3761 / NBRC 0622 / NRRL Y-65 / CBS 138</strain>
    </source>
</reference>